<reference key="1">
    <citation type="journal article" date="1984" name="J. Biol. Chem.">
        <title>Nucleotide sequence reveals overlap between T4 phage genes encoding dihydrofolate reductase and thymidylate synthase.</title>
        <authorList>
            <person name="Purohit S."/>
            <person name="Mathews C.K."/>
        </authorList>
    </citation>
    <scope>NUCLEOTIDE SEQUENCE [GENOMIC DNA]</scope>
</reference>
<reference key="2">
    <citation type="journal article" date="2003" name="Microbiol. Mol. Biol. Rev.">
        <title>Bacteriophage T4 genome.</title>
        <authorList>
            <person name="Miller E.S."/>
            <person name="Kutter E."/>
            <person name="Mosig G."/>
            <person name="Arisaka F."/>
            <person name="Kunisawa T."/>
            <person name="Ruger W."/>
        </authorList>
    </citation>
    <scope>NUCLEOTIDE SEQUENCE [LARGE SCALE GENOMIC DNA]</scope>
</reference>
<reference key="3">
    <citation type="journal article" date="1986" name="Cell">
        <title>Characterization of the intron in the phage T4 thymidylate synthase gene and evidence for its self-excision from the primary transcript.</title>
        <authorList>
            <person name="Chu F.K."/>
            <person name="Maley G.F."/>
            <person name="West D.K."/>
            <person name="Belfort M."/>
            <person name="Maley F."/>
        </authorList>
    </citation>
    <scope>NUCLEOTIDE SEQUENCE [GENOMIC DNA] OF 123-193</scope>
    <source>
        <strain>ALC4</strain>
    </source>
</reference>
<comment type="function">
    <text evidence="1">Key enzyme in folate metabolism. Catalyzes an essential reaction for de novo glycine and purine synthesis, and for DNA precursor synthesis (By similarity).</text>
</comment>
<comment type="catalytic activity">
    <reaction evidence="2">
        <text>(6S)-5,6,7,8-tetrahydrofolate + NADP(+) = 7,8-dihydrofolate + NADPH + H(+)</text>
        <dbReference type="Rhea" id="RHEA:15009"/>
        <dbReference type="ChEBI" id="CHEBI:15378"/>
        <dbReference type="ChEBI" id="CHEBI:57451"/>
        <dbReference type="ChEBI" id="CHEBI:57453"/>
        <dbReference type="ChEBI" id="CHEBI:57783"/>
        <dbReference type="ChEBI" id="CHEBI:58349"/>
        <dbReference type="EC" id="1.5.1.3"/>
    </reaction>
</comment>
<comment type="pathway">
    <text>Cofactor biosynthesis; tetrahydrofolate biosynthesis; 5,6,7,8-tetrahydrofolate from 7,8-dihydrofolate: step 1/1.</text>
</comment>
<comment type="similarity">
    <text evidence="3">Belongs to the dihydrofolate reductase family.</text>
</comment>
<organismHost>
    <name type="scientific">Escherichia coli</name>
    <dbReference type="NCBI Taxonomy" id="562"/>
</organismHost>
<accession>P04382</accession>
<keyword id="KW-0002">3D-structure</keyword>
<keyword id="KW-0046">Antibiotic resistance</keyword>
<keyword id="KW-0487">Methotrexate resistance</keyword>
<keyword id="KW-0521">NADP</keyword>
<keyword id="KW-0554">One-carbon metabolism</keyword>
<keyword id="KW-0560">Oxidoreductase</keyword>
<keyword id="KW-1185">Reference proteome</keyword>
<keyword id="KW-0817">Trimethoprim resistance</keyword>
<protein>
    <recommendedName>
        <fullName>Dihydrofolate reductase</fullName>
        <ecNumber>1.5.1.3</ecNumber>
    </recommendedName>
</protein>
<organism>
    <name type="scientific">Enterobacteria phage T4</name>
    <name type="common">Bacteriophage T4</name>
    <dbReference type="NCBI Taxonomy" id="10665"/>
    <lineage>
        <taxon>Viruses</taxon>
        <taxon>Duplodnaviria</taxon>
        <taxon>Heunggongvirae</taxon>
        <taxon>Uroviricota</taxon>
        <taxon>Caudoviricetes</taxon>
        <taxon>Straboviridae</taxon>
        <taxon>Tevenvirinae</taxon>
        <taxon>Tequatrovirus</taxon>
    </lineage>
</organism>
<gene>
    <name type="primary">frd</name>
</gene>
<evidence type="ECO:0000250" key="1"/>
<evidence type="ECO:0000255" key="2">
    <source>
        <dbReference type="PROSITE-ProRule" id="PRU00660"/>
    </source>
</evidence>
<evidence type="ECO:0000305" key="3"/>
<evidence type="ECO:0007829" key="4">
    <source>
        <dbReference type="PDB" id="1JUV"/>
    </source>
</evidence>
<dbReference type="EC" id="1.5.1.3"/>
<dbReference type="EMBL" id="AH001329">
    <property type="protein sequence ID" value="AAA32491.1"/>
    <property type="molecule type" value="Genomic_DNA"/>
</dbReference>
<dbReference type="EMBL" id="AF158101">
    <property type="protein sequence ID" value="AAD42577.1"/>
    <property type="molecule type" value="Genomic_DNA"/>
</dbReference>
<dbReference type="EMBL" id="M12742">
    <property type="protein sequence ID" value="AAC12815.1"/>
    <property type="molecule type" value="Genomic_DNA"/>
</dbReference>
<dbReference type="PIR" id="A00396">
    <property type="entry name" value="RDBPT4"/>
</dbReference>
<dbReference type="RefSeq" id="NP_049850.1">
    <property type="nucleotide sequence ID" value="NC_000866.4"/>
</dbReference>
<dbReference type="PDB" id="1JUV">
    <property type="method" value="X-ray"/>
    <property type="resolution" value="1.70 A"/>
    <property type="chains" value="A=1-193"/>
</dbReference>
<dbReference type="PDBsum" id="1JUV"/>
<dbReference type="SMR" id="P04382"/>
<dbReference type="GeneID" id="1258671"/>
<dbReference type="KEGG" id="vg:1258671"/>
<dbReference type="OrthoDB" id="9577at10239"/>
<dbReference type="UniPathway" id="UPA00077">
    <property type="reaction ID" value="UER00158"/>
</dbReference>
<dbReference type="EvolutionaryTrace" id="P04382"/>
<dbReference type="Proteomes" id="UP000009087">
    <property type="component" value="Segment"/>
</dbReference>
<dbReference type="GO" id="GO:0004146">
    <property type="term" value="F:dihydrofolate reductase activity"/>
    <property type="evidence" value="ECO:0000314"/>
    <property type="project" value="CACAO"/>
</dbReference>
<dbReference type="GO" id="GO:0006730">
    <property type="term" value="P:one-carbon metabolic process"/>
    <property type="evidence" value="ECO:0007669"/>
    <property type="project" value="UniProtKB-KW"/>
</dbReference>
<dbReference type="GO" id="GO:0046677">
    <property type="term" value="P:response to antibiotic"/>
    <property type="evidence" value="ECO:0007669"/>
    <property type="project" value="UniProtKB-KW"/>
</dbReference>
<dbReference type="GO" id="GO:0031427">
    <property type="term" value="P:response to methotrexate"/>
    <property type="evidence" value="ECO:0007669"/>
    <property type="project" value="UniProtKB-KW"/>
</dbReference>
<dbReference type="GO" id="GO:0046654">
    <property type="term" value="P:tetrahydrofolate biosynthetic process"/>
    <property type="evidence" value="ECO:0007669"/>
    <property type="project" value="UniProtKB-UniPathway"/>
</dbReference>
<dbReference type="Gene3D" id="3.40.430.10">
    <property type="entry name" value="Dihydrofolate Reductase, subunit A"/>
    <property type="match status" value="1"/>
</dbReference>
<dbReference type="InterPro" id="IPR024072">
    <property type="entry name" value="DHFR-like_dom_sf"/>
</dbReference>
<dbReference type="InterPro" id="IPR017925">
    <property type="entry name" value="DHFR_CS"/>
</dbReference>
<dbReference type="InterPro" id="IPR001796">
    <property type="entry name" value="DHFR_dom"/>
</dbReference>
<dbReference type="Pfam" id="PF00186">
    <property type="entry name" value="DHFR_1"/>
    <property type="match status" value="1"/>
</dbReference>
<dbReference type="PRINTS" id="PR00070">
    <property type="entry name" value="DHFR"/>
</dbReference>
<dbReference type="SUPFAM" id="SSF53597">
    <property type="entry name" value="Dihydrofolate reductase-like"/>
    <property type="match status" value="1"/>
</dbReference>
<dbReference type="PROSITE" id="PS00075">
    <property type="entry name" value="DHFR_1"/>
    <property type="match status" value="1"/>
</dbReference>
<dbReference type="PROSITE" id="PS51330">
    <property type="entry name" value="DHFR_2"/>
    <property type="match status" value="1"/>
</dbReference>
<sequence length="193" mass="21713">MIKLVFRYSPTKTVDGFNELAFGLGDGLPWGRVKKDLQNFKARTEGTIMIMGAKTFQSLPTLLPGRSHIVVCDLARDYPVTKDGDLAHFYITWEQYITYISGGEIQVSSPNAPFETMLDQNSKVSVIGGPALLYAALPYADEVVVSRIVKRHRVNSTVQLDASFLDDISKREMVETHWYKIDEVTTLTESVYK</sequence>
<feature type="chain" id="PRO_0000186434" description="Dihydrofolate reductase">
    <location>
        <begin position="1"/>
        <end position="193"/>
    </location>
</feature>
<feature type="domain" description="DHFR" evidence="2">
    <location>
        <begin position="1"/>
        <end position="193"/>
    </location>
</feature>
<feature type="binding site">
    <location>
        <position position="7"/>
    </location>
    <ligand>
        <name>NADP(+)</name>
        <dbReference type="ChEBI" id="CHEBI:58349"/>
    </ligand>
</feature>
<feature type="binding site">
    <location>
        <begin position="22"/>
        <end position="27"/>
    </location>
    <ligand>
        <name>NADP(+)</name>
        <dbReference type="ChEBI" id="CHEBI:58349"/>
    </ligand>
</feature>
<feature type="binding site">
    <location>
        <begin position="52"/>
        <end position="55"/>
    </location>
    <ligand>
        <name>NADP(+)</name>
        <dbReference type="ChEBI" id="CHEBI:58349"/>
    </ligand>
</feature>
<feature type="binding site">
    <location>
        <begin position="73"/>
        <end position="77"/>
    </location>
    <ligand>
        <name>NADP(+)</name>
        <dbReference type="ChEBI" id="CHEBI:58349"/>
    </ligand>
</feature>
<feature type="strand" evidence="4">
    <location>
        <begin position="2"/>
        <end position="12"/>
    </location>
</feature>
<feature type="strand" evidence="4">
    <location>
        <begin position="18"/>
        <end position="24"/>
    </location>
</feature>
<feature type="helix" evidence="4">
    <location>
        <begin position="34"/>
        <end position="44"/>
    </location>
</feature>
<feature type="strand" evidence="4">
    <location>
        <begin position="47"/>
        <end position="52"/>
    </location>
</feature>
<feature type="helix" evidence="4">
    <location>
        <begin position="53"/>
        <end position="57"/>
    </location>
</feature>
<feature type="strand" evidence="4">
    <location>
        <begin position="68"/>
        <end position="71"/>
    </location>
</feature>
<feature type="strand" evidence="4">
    <location>
        <begin position="88"/>
        <end position="91"/>
    </location>
</feature>
<feature type="helix" evidence="4">
    <location>
        <begin position="93"/>
        <end position="100"/>
    </location>
</feature>
<feature type="strand" evidence="4">
    <location>
        <begin position="105"/>
        <end position="108"/>
    </location>
</feature>
<feature type="strand" evidence="4">
    <location>
        <begin position="115"/>
        <end position="118"/>
    </location>
</feature>
<feature type="strand" evidence="4">
    <location>
        <begin position="124"/>
        <end position="128"/>
    </location>
</feature>
<feature type="helix" evidence="4">
    <location>
        <begin position="130"/>
        <end position="136"/>
    </location>
</feature>
<feature type="helix" evidence="4">
    <location>
        <begin position="137"/>
        <end position="139"/>
    </location>
</feature>
<feature type="strand" evidence="4">
    <location>
        <begin position="141"/>
        <end position="152"/>
    </location>
</feature>
<feature type="strand" evidence="4">
    <location>
        <begin position="157"/>
        <end position="160"/>
    </location>
</feature>
<feature type="helix" evidence="4">
    <location>
        <begin position="162"/>
        <end position="169"/>
    </location>
</feature>
<feature type="strand" evidence="4">
    <location>
        <begin position="173"/>
        <end position="182"/>
    </location>
</feature>
<feature type="strand" evidence="4">
    <location>
        <begin position="185"/>
        <end position="192"/>
    </location>
</feature>
<proteinExistence type="evidence at protein level"/>
<name>DYR_BPT4</name>